<feature type="chain" id="PRO_0000095932" description="Translation initiation factor IF-1, chloroplastic">
    <location>
        <begin position="1"/>
        <end position="78"/>
    </location>
</feature>
<feature type="domain" description="S1-like" evidence="1">
    <location>
        <begin position="1"/>
        <end position="72"/>
    </location>
</feature>
<proteinExistence type="inferred from homology"/>
<protein>
    <recommendedName>
        <fullName evidence="1">Translation initiation factor IF-1, chloroplastic</fullName>
    </recommendedName>
</protein>
<comment type="function">
    <text evidence="1">One of the essential components for the initiation of protein synthesis. Stabilizes the binding of IF-2 and IF-3 on the 30S subunit to which N-formylmethionyl-tRNA(fMet) subsequently binds. Helps modulate mRNA selection, yielding the 30S pre-initiation complex (PIC). Upon addition of the 50S ribosomal subunit IF-1, IF-2 and IF-3 are released leaving the mature 70S translation initiation complex.</text>
</comment>
<comment type="subunit">
    <text evidence="1">Component of the 30S ribosomal translation pre-initiation complex which assembles on the 30S ribosome in the order IF-2 and IF-3, IF-1 and N-formylmethionyl-tRNA(fMet); mRNA recruitment can occur at any time during PIC assembly.</text>
</comment>
<comment type="subcellular location">
    <subcellularLocation>
        <location evidence="1">Plastid</location>
        <location evidence="1">Chloroplast</location>
    </subcellularLocation>
</comment>
<comment type="similarity">
    <text evidence="1">Belongs to the IF-1 family.</text>
</comment>
<reference key="1">
    <citation type="journal article" date="2005" name="Gene">
        <title>The first complete chloroplast genome sequence of a lycophyte, Huperzia lucidula (Lycopodiaceae).</title>
        <authorList>
            <person name="Wolf P.G."/>
            <person name="Karol K.G."/>
            <person name="Mandoli D.F."/>
            <person name="Kuehl J.V."/>
            <person name="Arumuganathan K."/>
            <person name="Ellis M.W."/>
            <person name="Mishler B.D."/>
            <person name="Kelch D.G."/>
            <person name="Olmstead R.G."/>
            <person name="Boore J.L."/>
        </authorList>
    </citation>
    <scope>NUCLEOTIDE SEQUENCE [LARGE SCALE GENOMIC DNA]</scope>
</reference>
<sequence length="78" mass="9032">MKKQKLIDMEGVVTESLPNTMFRVCLDNGCQVLTHVSGRMRRNYIRILPGDRVKVESSPYDLTKGRITYRFHTKSSND</sequence>
<accession>Q5SD15</accession>
<evidence type="ECO:0000255" key="1">
    <source>
        <dbReference type="HAMAP-Rule" id="MF_00075"/>
    </source>
</evidence>
<organism>
    <name type="scientific">Huperzia lucidula</name>
    <name type="common">Shining clubmoss</name>
    <name type="synonym">Lycopodium lucidulum</name>
    <dbReference type="NCBI Taxonomy" id="37429"/>
    <lineage>
        <taxon>Eukaryota</taxon>
        <taxon>Viridiplantae</taxon>
        <taxon>Streptophyta</taxon>
        <taxon>Embryophyta</taxon>
        <taxon>Tracheophyta</taxon>
        <taxon>Lycopodiopsida</taxon>
        <taxon>Lycopodiales</taxon>
        <taxon>Lycopodiaceae</taxon>
        <taxon>Huperzioideae</taxon>
        <taxon>Huperzia</taxon>
    </lineage>
</organism>
<keyword id="KW-0150">Chloroplast</keyword>
<keyword id="KW-0396">Initiation factor</keyword>
<keyword id="KW-0934">Plastid</keyword>
<keyword id="KW-0648">Protein biosynthesis</keyword>
<keyword id="KW-0694">RNA-binding</keyword>
<keyword id="KW-0699">rRNA-binding</keyword>
<geneLocation type="chloroplast"/>
<gene>
    <name evidence="1" type="primary">infA</name>
</gene>
<name>IF1C_HUPLU</name>
<dbReference type="EMBL" id="AY660566">
    <property type="protein sequence ID" value="AAT80690.1"/>
    <property type="molecule type" value="Genomic_DNA"/>
</dbReference>
<dbReference type="RefSeq" id="YP_209494.1">
    <property type="nucleotide sequence ID" value="NC_006861.1"/>
</dbReference>
<dbReference type="SMR" id="Q5SD15"/>
<dbReference type="GeneID" id="3283743"/>
<dbReference type="GO" id="GO:0009507">
    <property type="term" value="C:chloroplast"/>
    <property type="evidence" value="ECO:0007669"/>
    <property type="project" value="UniProtKB-SubCell"/>
</dbReference>
<dbReference type="GO" id="GO:0005829">
    <property type="term" value="C:cytosol"/>
    <property type="evidence" value="ECO:0007669"/>
    <property type="project" value="TreeGrafter"/>
</dbReference>
<dbReference type="GO" id="GO:0043022">
    <property type="term" value="F:ribosome binding"/>
    <property type="evidence" value="ECO:0007669"/>
    <property type="project" value="UniProtKB-UniRule"/>
</dbReference>
<dbReference type="GO" id="GO:0019843">
    <property type="term" value="F:rRNA binding"/>
    <property type="evidence" value="ECO:0007669"/>
    <property type="project" value="UniProtKB-UniRule"/>
</dbReference>
<dbReference type="GO" id="GO:0003743">
    <property type="term" value="F:translation initiation factor activity"/>
    <property type="evidence" value="ECO:0007669"/>
    <property type="project" value="UniProtKB-UniRule"/>
</dbReference>
<dbReference type="CDD" id="cd04451">
    <property type="entry name" value="S1_IF1"/>
    <property type="match status" value="1"/>
</dbReference>
<dbReference type="FunFam" id="2.40.50.140:FF:000002">
    <property type="entry name" value="Translation initiation factor IF-1"/>
    <property type="match status" value="1"/>
</dbReference>
<dbReference type="Gene3D" id="2.40.50.140">
    <property type="entry name" value="Nucleic acid-binding proteins"/>
    <property type="match status" value="1"/>
</dbReference>
<dbReference type="HAMAP" id="MF_00075">
    <property type="entry name" value="IF_1"/>
    <property type="match status" value="1"/>
</dbReference>
<dbReference type="InterPro" id="IPR012340">
    <property type="entry name" value="NA-bd_OB-fold"/>
</dbReference>
<dbReference type="InterPro" id="IPR006196">
    <property type="entry name" value="RNA-binding_domain_S1_IF1"/>
</dbReference>
<dbReference type="InterPro" id="IPR004368">
    <property type="entry name" value="TIF_IF1"/>
</dbReference>
<dbReference type="NCBIfam" id="TIGR00008">
    <property type="entry name" value="infA"/>
    <property type="match status" value="1"/>
</dbReference>
<dbReference type="PANTHER" id="PTHR33370">
    <property type="entry name" value="TRANSLATION INITIATION FACTOR IF-1, CHLOROPLASTIC"/>
    <property type="match status" value="1"/>
</dbReference>
<dbReference type="PANTHER" id="PTHR33370:SF1">
    <property type="entry name" value="TRANSLATION INITIATION FACTOR IF-1, CHLOROPLASTIC"/>
    <property type="match status" value="1"/>
</dbReference>
<dbReference type="Pfam" id="PF01176">
    <property type="entry name" value="eIF-1a"/>
    <property type="match status" value="1"/>
</dbReference>
<dbReference type="SUPFAM" id="SSF50249">
    <property type="entry name" value="Nucleic acid-binding proteins"/>
    <property type="match status" value="1"/>
</dbReference>
<dbReference type="PROSITE" id="PS50832">
    <property type="entry name" value="S1_IF1_TYPE"/>
    <property type="match status" value="1"/>
</dbReference>